<organism>
    <name type="scientific">Erwinia amylovora (strain CFBP1430)</name>
    <dbReference type="NCBI Taxonomy" id="665029"/>
    <lineage>
        <taxon>Bacteria</taxon>
        <taxon>Pseudomonadati</taxon>
        <taxon>Pseudomonadota</taxon>
        <taxon>Gammaproteobacteria</taxon>
        <taxon>Enterobacterales</taxon>
        <taxon>Erwiniaceae</taxon>
        <taxon>Erwinia</taxon>
    </lineage>
</organism>
<sequence length="117" mass="13416">MGTSELLKQIYDINLSYLLLAQRIINQEKVSAMFRLGIDEAMADALARLTLPEMVKLAETNQLVCQFRFDDHQSISRLTRESRVEDLQQIHTGILLSSRLLRNVTKEQETPKKRAAS</sequence>
<name>FLHD_ERWAC</name>
<accession>D4HVG6</accession>
<comment type="function">
    <text evidence="1">Functions in complex with FlhC as a master transcriptional regulator that regulates transcription of several flagellar and non-flagellar operons by binding to their promoter region. Activates expression of class 2 flagellar genes, including fliA, which is a flagellum-specific sigma factor that turns on the class 3 genes. Also regulates genes whose products function in a variety of physiological pathways.</text>
</comment>
<comment type="subunit">
    <text evidence="1">Homodimer; disulfide-linked. Forms a heterohexamer composed of two FlhC and four FlhD subunits. Each FlhC binds a FlhD dimer, forming a heterotrimer, and a hexamer assembles by dimerization of two heterotrimers.</text>
</comment>
<comment type="subcellular location">
    <subcellularLocation>
        <location evidence="1">Cytoplasm</location>
    </subcellularLocation>
</comment>
<comment type="domain">
    <text evidence="1">The C-terminal region contains a putative helix-turn-helix (HTH) motif, suggesting that this region may bind DNA.</text>
</comment>
<comment type="similarity">
    <text evidence="1">Belongs to the FlhD family.</text>
</comment>
<feature type="chain" id="PRO_0000406774" description="Flagellar transcriptional regulator FlhD">
    <location>
        <begin position="1"/>
        <end position="117"/>
    </location>
</feature>
<feature type="disulfide bond" description="Interchain" evidence="1">
    <location>
        <position position="65"/>
    </location>
</feature>
<dbReference type="EMBL" id="FN434113">
    <property type="protein sequence ID" value="CBA21053.1"/>
    <property type="molecule type" value="Genomic_DNA"/>
</dbReference>
<dbReference type="RefSeq" id="WP_004158054.1">
    <property type="nucleotide sequence ID" value="NC_013961.1"/>
</dbReference>
<dbReference type="SMR" id="D4HVG6"/>
<dbReference type="STRING" id="665029.EAMY_2100"/>
<dbReference type="GeneID" id="97606319"/>
<dbReference type="KEGG" id="eam:EAMY_2100"/>
<dbReference type="PATRIC" id="fig|665029.3.peg.2014"/>
<dbReference type="eggNOG" id="ENOG5031P80">
    <property type="taxonomic scope" value="Bacteria"/>
</dbReference>
<dbReference type="HOGENOM" id="CLU_144160_0_0_6"/>
<dbReference type="OrthoDB" id="5298036at2"/>
<dbReference type="Proteomes" id="UP000001841">
    <property type="component" value="Chromosome"/>
</dbReference>
<dbReference type="GO" id="GO:0005737">
    <property type="term" value="C:cytoplasm"/>
    <property type="evidence" value="ECO:0007669"/>
    <property type="project" value="UniProtKB-SubCell"/>
</dbReference>
<dbReference type="GO" id="GO:0003677">
    <property type="term" value="F:DNA binding"/>
    <property type="evidence" value="ECO:0007669"/>
    <property type="project" value="UniProtKB-UniRule"/>
</dbReference>
<dbReference type="GO" id="GO:0044780">
    <property type="term" value="P:bacterial-type flagellum assembly"/>
    <property type="evidence" value="ECO:0007669"/>
    <property type="project" value="InterPro"/>
</dbReference>
<dbReference type="GO" id="GO:0045893">
    <property type="term" value="P:positive regulation of DNA-templated transcription"/>
    <property type="evidence" value="ECO:0007669"/>
    <property type="project" value="InterPro"/>
</dbReference>
<dbReference type="GO" id="GO:1902208">
    <property type="term" value="P:regulation of bacterial-type flagellum assembly"/>
    <property type="evidence" value="ECO:0007669"/>
    <property type="project" value="UniProtKB-UniRule"/>
</dbReference>
<dbReference type="Gene3D" id="1.10.4000.10">
    <property type="entry name" value="Flagellar transcriptional activator FlhD"/>
    <property type="match status" value="1"/>
</dbReference>
<dbReference type="HAMAP" id="MF_00725">
    <property type="entry name" value="FlhD"/>
    <property type="match status" value="1"/>
</dbReference>
<dbReference type="InterPro" id="IPR023559">
    <property type="entry name" value="Flagellar_FlhD"/>
</dbReference>
<dbReference type="InterPro" id="IPR036194">
    <property type="entry name" value="FlhD_sf"/>
</dbReference>
<dbReference type="NCBIfam" id="NF002783">
    <property type="entry name" value="PRK02909.1-1"/>
    <property type="match status" value="1"/>
</dbReference>
<dbReference type="Pfam" id="PF05247">
    <property type="entry name" value="FlhD"/>
    <property type="match status" value="1"/>
</dbReference>
<dbReference type="SUPFAM" id="SSF63592">
    <property type="entry name" value="Flagellar transcriptional activator FlhD"/>
    <property type="match status" value="1"/>
</dbReference>
<evidence type="ECO:0000255" key="1">
    <source>
        <dbReference type="HAMAP-Rule" id="MF_00725"/>
    </source>
</evidence>
<reference key="1">
    <citation type="journal article" date="2010" name="Mol. Plant Microbe Interact.">
        <title>Complete genome sequence of the fire blight pathogen Erwinia amylovora CFBP 1430 and comparison to other Erwinia spp.</title>
        <authorList>
            <person name="Smits T.H."/>
            <person name="Rezzonico F."/>
            <person name="Kamber T."/>
            <person name="Blom J."/>
            <person name="Goesmann A."/>
            <person name="Frey J.E."/>
            <person name="Duffy B."/>
        </authorList>
    </citation>
    <scope>NUCLEOTIDE SEQUENCE [LARGE SCALE GENOMIC DNA]</scope>
    <source>
        <strain>CFBP1430</strain>
    </source>
</reference>
<keyword id="KW-0010">Activator</keyword>
<keyword id="KW-1005">Bacterial flagellum biogenesis</keyword>
<keyword id="KW-0963">Cytoplasm</keyword>
<keyword id="KW-1015">Disulfide bond</keyword>
<keyword id="KW-0238">DNA-binding</keyword>
<keyword id="KW-0804">Transcription</keyword>
<keyword id="KW-0805">Transcription regulation</keyword>
<gene>
    <name evidence="1" type="primary">flhD</name>
    <name type="ordered locus">EAMY_2100</name>
</gene>
<protein>
    <recommendedName>
        <fullName evidence="1">Flagellar transcriptional regulator FlhD</fullName>
    </recommendedName>
</protein>
<proteinExistence type="inferred from homology"/>